<proteinExistence type="evidence at protein level"/>
<feature type="signal peptide" evidence="1">
    <location>
        <begin position="1"/>
        <end position="23"/>
    </location>
</feature>
<feature type="chain" id="PRO_0000434574" description="Secretory immunoglobulin A-binding protein EsiB" evidence="1">
    <location>
        <begin position="24"/>
        <end position="490"/>
    </location>
</feature>
<feature type="repeat" description="Sel1-like 1" evidence="6">
    <location>
        <begin position="39"/>
        <end position="74"/>
    </location>
</feature>
<feature type="repeat" description="Sel1-like 2" evidence="6">
    <location>
        <begin position="77"/>
        <end position="109"/>
    </location>
</feature>
<feature type="repeat" description="Sel1-like 3" evidence="6">
    <location>
        <begin position="111"/>
        <end position="145"/>
    </location>
</feature>
<feature type="repeat" description="Sel1-like 4" evidence="6">
    <location>
        <begin position="153"/>
        <end position="182"/>
    </location>
</feature>
<feature type="repeat" description="Sel1-like 5" evidence="6">
    <location>
        <begin position="185"/>
        <end position="218"/>
    </location>
</feature>
<feature type="repeat" description="Sel1-like 6" evidence="6">
    <location>
        <begin position="222"/>
        <end position="254"/>
    </location>
</feature>
<feature type="repeat" description="Sel1-like 7" evidence="6">
    <location>
        <begin position="256"/>
        <end position="290"/>
    </location>
</feature>
<feature type="repeat" description="Sel1-like 8" evidence="6">
    <location>
        <begin position="291"/>
        <end position="327"/>
    </location>
</feature>
<feature type="repeat" description="Sel1-like 9" evidence="6">
    <location>
        <begin position="328"/>
        <end position="361"/>
    </location>
</feature>
<feature type="repeat" description="Sel1-like 10" evidence="6">
    <location>
        <begin position="364"/>
        <end position="397"/>
    </location>
</feature>
<feature type="repeat" description="Sel1-like 11" evidence="6">
    <location>
        <begin position="399"/>
        <end position="430"/>
    </location>
</feature>
<feature type="binding site" evidence="4">
    <location>
        <position position="122"/>
    </location>
    <ligand>
        <name>Mg(2+)</name>
        <dbReference type="ChEBI" id="CHEBI:18420"/>
    </ligand>
</feature>
<feature type="binding site" evidence="4">
    <location>
        <position position="159"/>
    </location>
    <ligand>
        <name>Mg(2+)</name>
        <dbReference type="ChEBI" id="CHEBI:18420"/>
    </ligand>
</feature>
<feature type="binding site" evidence="4">
    <location>
        <position position="161"/>
    </location>
    <ligand>
        <name>Mg(2+)</name>
        <dbReference type="ChEBI" id="CHEBI:18420"/>
    </ligand>
</feature>
<feature type="helix" evidence="9">
    <location>
        <begin position="27"/>
        <end position="35"/>
    </location>
</feature>
<feature type="helix" evidence="9">
    <location>
        <begin position="39"/>
        <end position="51"/>
    </location>
</feature>
<feature type="strand" evidence="9">
    <location>
        <begin position="53"/>
        <end position="55"/>
    </location>
</feature>
<feature type="helix" evidence="9">
    <location>
        <begin position="59"/>
        <end position="71"/>
    </location>
</feature>
<feature type="helix" evidence="9">
    <location>
        <begin position="75"/>
        <end position="87"/>
    </location>
</feature>
<feature type="strand" evidence="9">
    <location>
        <begin position="89"/>
        <end position="91"/>
    </location>
</feature>
<feature type="helix" evidence="9">
    <location>
        <begin position="95"/>
        <end position="107"/>
    </location>
</feature>
<feature type="helix" evidence="9">
    <location>
        <begin position="111"/>
        <end position="123"/>
    </location>
</feature>
<feature type="strand" evidence="9">
    <location>
        <begin position="125"/>
        <end position="127"/>
    </location>
</feature>
<feature type="helix" evidence="9">
    <location>
        <begin position="131"/>
        <end position="143"/>
    </location>
</feature>
<feature type="helix" evidence="9">
    <location>
        <begin position="147"/>
        <end position="159"/>
    </location>
</feature>
<feature type="strand" evidence="9">
    <location>
        <begin position="161"/>
        <end position="163"/>
    </location>
</feature>
<feature type="helix" evidence="9">
    <location>
        <begin position="167"/>
        <end position="179"/>
    </location>
</feature>
<feature type="helix" evidence="9">
    <location>
        <begin position="183"/>
        <end position="195"/>
    </location>
</feature>
<feature type="strand" evidence="9">
    <location>
        <begin position="197"/>
        <end position="199"/>
    </location>
</feature>
<feature type="helix" evidence="9">
    <location>
        <begin position="203"/>
        <end position="215"/>
    </location>
</feature>
<feature type="helix" evidence="9">
    <location>
        <begin position="219"/>
        <end position="231"/>
    </location>
</feature>
<feature type="strand" evidence="9">
    <location>
        <begin position="233"/>
        <end position="235"/>
    </location>
</feature>
<feature type="helix" evidence="9">
    <location>
        <begin position="239"/>
        <end position="250"/>
    </location>
</feature>
<feature type="turn" evidence="9">
    <location>
        <begin position="251"/>
        <end position="253"/>
    </location>
</feature>
<feature type="helix" evidence="9">
    <location>
        <begin position="255"/>
        <end position="267"/>
    </location>
</feature>
<feature type="turn" evidence="9">
    <location>
        <begin position="268"/>
        <end position="270"/>
    </location>
</feature>
<feature type="helix" evidence="9">
    <location>
        <begin position="275"/>
        <end position="287"/>
    </location>
</feature>
<feature type="helix" evidence="9">
    <location>
        <begin position="291"/>
        <end position="303"/>
    </location>
</feature>
<feature type="helix" evidence="9">
    <location>
        <begin position="312"/>
        <end position="324"/>
    </location>
</feature>
<feature type="helix" evidence="9">
    <location>
        <begin position="328"/>
        <end position="340"/>
    </location>
</feature>
<feature type="helix" evidence="9">
    <location>
        <begin position="344"/>
        <end position="359"/>
    </location>
</feature>
<feature type="helix" evidence="9">
    <location>
        <begin position="363"/>
        <end position="375"/>
    </location>
</feature>
<feature type="strand" evidence="9">
    <location>
        <begin position="377"/>
        <end position="379"/>
    </location>
</feature>
<feature type="helix" evidence="9">
    <location>
        <begin position="383"/>
        <end position="395"/>
    </location>
</feature>
<feature type="helix" evidence="9">
    <location>
        <begin position="399"/>
        <end position="411"/>
    </location>
</feature>
<feature type="strand" evidence="9">
    <location>
        <begin position="413"/>
        <end position="415"/>
    </location>
</feature>
<feature type="helix" evidence="9">
    <location>
        <begin position="419"/>
        <end position="433"/>
    </location>
</feature>
<feature type="helix" evidence="9">
    <location>
        <begin position="436"/>
        <end position="446"/>
    </location>
</feature>
<feature type="helix" evidence="9">
    <location>
        <begin position="451"/>
        <end position="468"/>
    </location>
</feature>
<feature type="helix" evidence="9">
    <location>
        <begin position="470"/>
        <end position="479"/>
    </location>
</feature>
<evidence type="ECO:0000255" key="1"/>
<evidence type="ECO:0000269" key="2">
    <source>
    </source>
</evidence>
<evidence type="ECO:0000269" key="3">
    <source>
    </source>
</evidence>
<evidence type="ECO:0000269" key="4">
    <source>
    </source>
</evidence>
<evidence type="ECO:0000303" key="5">
    <source>
    </source>
</evidence>
<evidence type="ECO:0000303" key="6">
    <source>
    </source>
</evidence>
<evidence type="ECO:0000305" key="7">
    <source>
    </source>
</evidence>
<evidence type="ECO:0000305" key="8">
    <source>
    </source>
</evidence>
<evidence type="ECO:0007829" key="9">
    <source>
        <dbReference type="PDB" id="4BWR"/>
    </source>
</evidence>
<organism>
    <name type="scientific">Escherichia coli O6:H1 (strain CFT073 / ATCC 700928 / UPEC)</name>
    <dbReference type="NCBI Taxonomy" id="199310"/>
    <lineage>
        <taxon>Bacteria</taxon>
        <taxon>Pseudomonadati</taxon>
        <taxon>Pseudomonadota</taxon>
        <taxon>Gammaproteobacteria</taxon>
        <taxon>Enterobacterales</taxon>
        <taxon>Enterobacteriaceae</taxon>
        <taxon>Escherichia</taxon>
    </lineage>
</organism>
<keyword id="KW-0002">3D-structure</keyword>
<keyword id="KW-0903">Direct protein sequencing</keyword>
<keyword id="KW-0460">Magnesium</keyword>
<keyword id="KW-0479">Metal-binding</keyword>
<keyword id="KW-1185">Reference proteome</keyword>
<keyword id="KW-0677">Repeat</keyword>
<keyword id="KW-0732">Signal</keyword>
<keyword id="KW-0843">Virulence</keyword>
<dbReference type="EMBL" id="AE014075">
    <property type="protein sequence ID" value="AAN83742.1"/>
    <property type="molecule type" value="Genomic_DNA"/>
</dbReference>
<dbReference type="RefSeq" id="WP_000749215.1">
    <property type="nucleotide sequence ID" value="NZ_CP051263.1"/>
</dbReference>
<dbReference type="PDB" id="4BWR">
    <property type="method" value="X-ray"/>
    <property type="resolution" value="1.74 A"/>
    <property type="chains" value="A=24-490"/>
</dbReference>
<dbReference type="PDBsum" id="4BWR"/>
<dbReference type="SMR" id="A0A0H2VDN9"/>
<dbReference type="STRING" id="199310.c5321"/>
<dbReference type="KEGG" id="ecc:c5321"/>
<dbReference type="eggNOG" id="COG0790">
    <property type="taxonomic scope" value="Bacteria"/>
</dbReference>
<dbReference type="HOGENOM" id="CLU_000288_36_14_6"/>
<dbReference type="EvolutionaryTrace" id="A0A0H2VDN9"/>
<dbReference type="Proteomes" id="UP000001410">
    <property type="component" value="Chromosome"/>
</dbReference>
<dbReference type="GO" id="GO:0009986">
    <property type="term" value="C:cell surface"/>
    <property type="evidence" value="ECO:0000314"/>
    <property type="project" value="UniProtKB"/>
</dbReference>
<dbReference type="GO" id="GO:0019862">
    <property type="term" value="F:IgA binding"/>
    <property type="evidence" value="ECO:0000314"/>
    <property type="project" value="UniProtKB"/>
</dbReference>
<dbReference type="GO" id="GO:0046872">
    <property type="term" value="F:metal ion binding"/>
    <property type="evidence" value="ECO:0007669"/>
    <property type="project" value="UniProtKB-KW"/>
</dbReference>
<dbReference type="GO" id="GO:0050777">
    <property type="term" value="P:negative regulation of immune response"/>
    <property type="evidence" value="ECO:0000314"/>
    <property type="project" value="UniProtKB"/>
</dbReference>
<dbReference type="GO" id="GO:1902564">
    <property type="term" value="P:negative regulation of neutrophil activation"/>
    <property type="evidence" value="ECO:0000314"/>
    <property type="project" value="UniProtKB"/>
</dbReference>
<dbReference type="Gene3D" id="1.25.40.10">
    <property type="entry name" value="Tetratricopeptide repeat domain"/>
    <property type="match status" value="1"/>
</dbReference>
<dbReference type="InterPro" id="IPR006597">
    <property type="entry name" value="Sel1-like"/>
</dbReference>
<dbReference type="InterPro" id="IPR050767">
    <property type="entry name" value="Sel1_AlgK"/>
</dbReference>
<dbReference type="InterPro" id="IPR011990">
    <property type="entry name" value="TPR-like_helical_dom_sf"/>
</dbReference>
<dbReference type="PANTHER" id="PTHR11102:SF160">
    <property type="entry name" value="ERAD-ASSOCIATED E3 UBIQUITIN-PROTEIN LIGASE COMPONENT HRD3"/>
    <property type="match status" value="1"/>
</dbReference>
<dbReference type="PANTHER" id="PTHR11102">
    <property type="entry name" value="SEL-1-LIKE PROTEIN"/>
    <property type="match status" value="1"/>
</dbReference>
<dbReference type="Pfam" id="PF08238">
    <property type="entry name" value="Sel1"/>
    <property type="match status" value="11"/>
</dbReference>
<dbReference type="SMART" id="SM00671">
    <property type="entry name" value="SEL1"/>
    <property type="match status" value="11"/>
</dbReference>
<dbReference type="SUPFAM" id="SSF81901">
    <property type="entry name" value="HCP-like"/>
    <property type="match status" value="3"/>
</dbReference>
<sequence>MKKSLLAVMLTGLFALVSLPALGNVNLEQLKQKAESGEAKAQLELGYRYFQGNETTKDLTQAMDWFRRAAEQGYTPAEYVLGLRYMNGEGVPQDYAQAVIWYKKAALKGLPQAQQNLGVMYHEGNGVKVDKAESVKWFRLAAEQGRDSGQQSMGDAYFEGDGVTRDYVMAREWYSKAAEQGNVWSCNQLGYMYSRGLGVERNDAISAQWYRKSATSGDELGQLHLADMYYFGIGVTQDYTQSRVLFSQSAEQGNSIAQFRLGYILEQGLAGAKEPLKALEWYRKSAEQGNSDGQYYLAHLYDKGAEGVAKNREQAISWYTKSAEQGDATAQANLGAIYFRLGSEEEHKKAVEWFRKAAAKGEKAAQFNLGNALLQGKGVKKDEQQAAIWMRKAAEQGLSAAQVQLGEIYYYGLGVERDYVQAWAWFDTASTNDMNLFGTENRNITEKKLTAKQLQQAELLSQQYIEKYAPEAWARMQKLKAQSAVKTGNK</sequence>
<reference key="1">
    <citation type="journal article" date="2002" name="Proc. Natl. Acad. Sci. U.S.A.">
        <title>Extensive mosaic structure revealed by the complete genome sequence of uropathogenic Escherichia coli.</title>
        <authorList>
            <person name="Welch R.A."/>
            <person name="Burland V."/>
            <person name="Plunkett G. III"/>
            <person name="Redford P."/>
            <person name="Roesch P."/>
            <person name="Rasko D."/>
            <person name="Buckles E.L."/>
            <person name="Liou S.-R."/>
            <person name="Boutin A."/>
            <person name="Hackett J."/>
            <person name="Stroud D."/>
            <person name="Mayhew G.F."/>
            <person name="Rose D.J."/>
            <person name="Zhou S."/>
            <person name="Schwartz D.C."/>
            <person name="Perna N.T."/>
            <person name="Mobley H.L.T."/>
            <person name="Donnenberg M.S."/>
            <person name="Blattner F.R."/>
        </authorList>
    </citation>
    <scope>NUCLEOTIDE SEQUENCE [LARGE SCALE GENOMIC DNA]</scope>
    <source>
        <strain>CFT073 / ATCC 700928 / UPEC</strain>
    </source>
</reference>
<reference key="2">
    <citation type="journal article" date="2013" name="MBio">
        <title>EsiB, a novel pathogenic Escherichia coli secretory immunoglobulin A-binding protein impairing neutrophil activation.</title>
        <authorList>
            <person name="Pastorello I."/>
            <person name="Rossi Paccani S."/>
            <person name="Rosini R."/>
            <person name="Mattera R."/>
            <person name="Ferrer Navarro M."/>
            <person name="Urosev D."/>
            <person name="Nesta B."/>
            <person name="Lo Surdo P."/>
            <person name="Del Vecchio M."/>
            <person name="Rippa V."/>
            <person name="Bertoldi I."/>
            <person name="Gomes Moriel D."/>
            <person name="Laarman A.J."/>
            <person name="van Strijp J.A."/>
            <person name="Daura X."/>
            <person name="Pizza M."/>
            <person name="Serino L."/>
            <person name="Soriani M."/>
        </authorList>
    </citation>
    <scope>PROTEIN SEQUENCE OF 244-260</scope>
    <scope>FUNCTION IN INFECTION</scope>
    <scope>INTERACTION WITH HUMAN SECRETED IGA</scope>
    <scope>SUBUNIT</scope>
    <scope>SUBCELLULAR LOCATION</scope>
    <scope>INDUCTION</scope>
    <source>
        <strain>CFT073 / ATCC 700928 / UPEC</strain>
    </source>
</reference>
<reference key="3">
    <citation type="journal article" date="2010" name="Proc. Natl. Acad. Sci. U.S.A.">
        <title>Identification of protective and broadly conserved vaccine antigens from the genome of extraintestinal pathogenic Escherichia coli.</title>
        <authorList>
            <person name="Moriel D.G."/>
            <person name="Bertoldi I."/>
            <person name="Spagnuolo A."/>
            <person name="Marchi S."/>
            <person name="Rosini R."/>
            <person name="Nesta B."/>
            <person name="Pastorello I."/>
            <person name="Corea V.A."/>
            <person name="Torricelli G."/>
            <person name="Cartocci E."/>
            <person name="Savino S."/>
            <person name="Scarselli M."/>
            <person name="Dobrindt U."/>
            <person name="Hacker J."/>
            <person name="Tettelin H."/>
            <person name="Tallon L.J."/>
            <person name="Sullivan S."/>
            <person name="Wieler L.H."/>
            <person name="Ewers C."/>
            <person name="Pickard D."/>
            <person name="Dougan G."/>
            <person name="Fontana M.R."/>
            <person name="Rappuoli R."/>
            <person name="Pizza M."/>
            <person name="Serino L."/>
        </authorList>
    </citation>
    <scope>IDENTIFICATION</scope>
    <scope>BIOTECHNOLOGY</scope>
    <source>
        <strain>CFT073 / ATCC 700928 / UPEC</strain>
    </source>
</reference>
<reference key="4">
    <citation type="journal article" date="2013" name="BMC Struct. Biol.">
        <title>Crystal structure of c5321: a protective antigen present in uropathogenic Escherichia coli strains displaying an SLR fold.</title>
        <authorList>
            <person name="Urosev D."/>
            <person name="Ferrer-Navarro M."/>
            <person name="Pastorello I."/>
            <person name="Cartocci E."/>
            <person name="Costenaro L."/>
            <person name="Zhulenkovs D."/>
            <person name="Marechal J.D."/>
            <person name="Leonchiks A."/>
            <person name="Reverter D."/>
            <person name="Serino L."/>
            <person name="Soriani M."/>
            <person name="Daura X."/>
        </authorList>
    </citation>
    <scope>X-RAY CRYSTALLOGRAPHY (1.74 ANGSTROMS) OF 24-490 IN COMPLEX WITH MAGNESIUM</scope>
    <scope>COFACTOR</scope>
    <source>
        <strain>CFT073 / ATCC 700928 / UPEC</strain>
    </source>
</reference>
<protein>
    <recommendedName>
        <fullName evidence="5">Secretory immunoglobulin A-binding protein EsiB</fullName>
    </recommendedName>
</protein>
<gene>
    <name evidence="5" type="primary">esiB</name>
    <name type="ordered locus">c5321</name>
</gene>
<comment type="function">
    <text evidence="3">Upon host (human neutrophil) infection interferes with productive FCAR signaling, inhibiting secreted IgA (SIgA) effector functions and probably avoiding neutrophil activation. Inhibits the SIgA-mediated oxidative burst by neutrophils, decreases generation of ROS (reactive oxygen species) by neutrophils and reduces chemotaxis by neutrophils, all of which are SIgA effector functions used to stimulate the immune response. Does not block SIgA-binding to its receptor (FCAR) on neutrophils, but it decreases SIgA-stimulated phosphorylation of cytoplasmic proteins, including phospholipase C-gamma and MAP kinases, all actions that may be advantageous to the pathogen.</text>
</comment>
<comment type="cofactor">
    <cofactor evidence="4">
        <name>Mg(2+)</name>
        <dbReference type="ChEBI" id="CHEBI:18420"/>
    </cofactor>
    <text evidence="8">The physiological metal is unknown.</text>
</comment>
<comment type="subunit">
    <text evidence="3">Interacts with human secreted IgA (SIgA) at least via resides 244-260.</text>
</comment>
<comment type="subcellular location">
    <subcellularLocation>
        <location evidence="3">Cell surface</location>
    </subcellularLocation>
    <text evidence="3">Accumulates at 1 cell pole in the bladder of mice infected with this strain, in overexpressing bacteria the protein is found all over the cell surface but not in the secreted fraction (PubMed:23882011). Human blood sera from clinical patients with urinary tract infections reacts with antibodies to this protein (PubMed:23882011).</text>
</comment>
<comment type="induction">
    <text evidence="3">More highly transcribed in logarithmic than stationary phase. Protein is not detected in bacteria growing in culture but is detected upon infection of mice (at protein level).</text>
</comment>
<comment type="biotechnology">
    <text evidence="2">Immunizes 1/3 of injected mice against subsequent infection with E.coli strain CFT073, suggesting it might be a good vaccine candidate for ExPEC (extraintestinal pathogenic E.coli) strains.</text>
</comment>
<comment type="miscellaneous">
    <text evidence="7">Preferentially encoded in ExPEC strains (extraintestinal pathogenic E.coli).</text>
</comment>
<accession>A0A0H2VDN9</accession>
<name>ESIB_ECOL6</name>